<reference key="1">
    <citation type="journal article" date="2006" name="BMC Biol.">
        <title>The complete chloroplast DNA sequence of the green alga Oltmannsiellopsis viridis reveals a distinctive quadripartite architecture in the chloroplast genome of early diverging ulvophytes.</title>
        <authorList>
            <person name="Pombert J.-F."/>
            <person name="Lemieux C."/>
            <person name="Turmel M."/>
        </authorList>
    </citation>
    <scope>NUCLEOTIDE SEQUENCE [LARGE SCALE GENOMIC DNA]</scope>
</reference>
<accession>Q20EU9</accession>
<comment type="subcellular location">
    <subcellularLocation>
        <location>Plastid</location>
        <location>Chloroplast</location>
    </subcellularLocation>
</comment>
<comment type="similarity">
    <text evidence="1">Belongs to the bacterial ribosomal protein bL32 family.</text>
</comment>
<feature type="chain" id="PRO_0000276480" description="Large ribosomal subunit protein bL32c">
    <location>
        <begin position="1"/>
        <end position="49"/>
    </location>
</feature>
<feature type="region of interest" description="Disordered" evidence="2">
    <location>
        <begin position="1"/>
        <end position="23"/>
    </location>
</feature>
<organism>
    <name type="scientific">Oltmannsiellopsis viridis</name>
    <name type="common">Marine flagellate</name>
    <name type="synonym">Oltmannsiella viridis</name>
    <dbReference type="NCBI Taxonomy" id="51324"/>
    <lineage>
        <taxon>Eukaryota</taxon>
        <taxon>Viridiplantae</taxon>
        <taxon>Chlorophyta</taxon>
        <taxon>Ulvophyceae</taxon>
        <taxon>Oltmannsiellopsidales</taxon>
        <taxon>Oltmannsiellopsidaceae</taxon>
        <taxon>Oltmannsiellopsis</taxon>
    </lineage>
</organism>
<geneLocation type="chloroplast"/>
<protein>
    <recommendedName>
        <fullName evidence="1">Large ribosomal subunit protein bL32c</fullName>
    </recommendedName>
    <alternativeName>
        <fullName evidence="3">50S ribosomal protein L32, chloroplastic</fullName>
    </alternativeName>
</protein>
<dbReference type="EMBL" id="DQ291132">
    <property type="protein sequence ID" value="ABB81964.1"/>
    <property type="molecule type" value="Genomic_DNA"/>
</dbReference>
<dbReference type="RefSeq" id="YP_635896.1">
    <property type="nucleotide sequence ID" value="NC_008099.1"/>
</dbReference>
<dbReference type="SMR" id="Q20EU9"/>
<dbReference type="GeneID" id="4100102"/>
<dbReference type="GO" id="GO:0009507">
    <property type="term" value="C:chloroplast"/>
    <property type="evidence" value="ECO:0007669"/>
    <property type="project" value="UniProtKB-SubCell"/>
</dbReference>
<dbReference type="GO" id="GO:0015934">
    <property type="term" value="C:large ribosomal subunit"/>
    <property type="evidence" value="ECO:0007669"/>
    <property type="project" value="InterPro"/>
</dbReference>
<dbReference type="GO" id="GO:0003735">
    <property type="term" value="F:structural constituent of ribosome"/>
    <property type="evidence" value="ECO:0007669"/>
    <property type="project" value="InterPro"/>
</dbReference>
<dbReference type="GO" id="GO:0006412">
    <property type="term" value="P:translation"/>
    <property type="evidence" value="ECO:0007669"/>
    <property type="project" value="UniProtKB-UniRule"/>
</dbReference>
<dbReference type="HAMAP" id="MF_00340">
    <property type="entry name" value="Ribosomal_bL32"/>
    <property type="match status" value="1"/>
</dbReference>
<dbReference type="InterPro" id="IPR002677">
    <property type="entry name" value="Ribosomal_bL32"/>
</dbReference>
<dbReference type="Pfam" id="PF01783">
    <property type="entry name" value="Ribosomal_L32p"/>
    <property type="match status" value="1"/>
</dbReference>
<keyword id="KW-0150">Chloroplast</keyword>
<keyword id="KW-0934">Plastid</keyword>
<keyword id="KW-0687">Ribonucleoprotein</keyword>
<keyword id="KW-0689">Ribosomal protein</keyword>
<proteinExistence type="inferred from homology"/>
<name>RK32_OLTVI</name>
<evidence type="ECO:0000255" key="1">
    <source>
        <dbReference type="HAMAP-Rule" id="MF_00340"/>
    </source>
</evidence>
<evidence type="ECO:0000256" key="2">
    <source>
        <dbReference type="SAM" id="MobiDB-lite"/>
    </source>
</evidence>
<evidence type="ECO:0000305" key="3"/>
<gene>
    <name evidence="1" type="primary">rpl32</name>
</gene>
<sequence>MTPKKRKSKSKKNLRKTNWKKKASKQAIKALAVAKHVLASYNTAEATTN</sequence>